<reference key="1">
    <citation type="journal article" date="2008" name="BMC Genomics">
        <title>Acidithiobacillus ferrooxidans metabolism: from genome sequence to industrial applications.</title>
        <authorList>
            <person name="Valdes J."/>
            <person name="Pedroso I."/>
            <person name="Quatrini R."/>
            <person name="Dodson R.J."/>
            <person name="Tettelin H."/>
            <person name="Blake R. II"/>
            <person name="Eisen J.A."/>
            <person name="Holmes D.S."/>
        </authorList>
    </citation>
    <scope>NUCLEOTIDE SEQUENCE [LARGE SCALE GENOMIC DNA]</scope>
    <source>
        <strain>ATCC 23270 / DSM 14882 / CIP 104768 / NCIMB 8455</strain>
    </source>
</reference>
<protein>
    <recommendedName>
        <fullName evidence="1">Small ribosomal subunit protein uS13</fullName>
    </recommendedName>
    <alternativeName>
        <fullName evidence="3">30S ribosomal protein S13</fullName>
    </alternativeName>
</protein>
<proteinExistence type="inferred from homology"/>
<comment type="function">
    <text evidence="1">Located at the top of the head of the 30S subunit, it contacts several helices of the 16S rRNA. In the 70S ribosome it contacts the 23S rRNA (bridge B1a) and protein L5 of the 50S subunit (bridge B1b), connecting the 2 subunits; these bridges are implicated in subunit movement. Contacts the tRNAs in the A and P-sites.</text>
</comment>
<comment type="subunit">
    <text evidence="1">Part of the 30S ribosomal subunit. Forms a loose heterodimer with protein S19. Forms two bridges to the 50S subunit in the 70S ribosome.</text>
</comment>
<comment type="similarity">
    <text evidence="1">Belongs to the universal ribosomal protein uS13 family.</text>
</comment>
<sequence length="118" mass="13402">MARIAGVNIPNNKQIEIALTYIYGIGRTRARTVLSAADIACDMRVKDISEPELERIRSEVAKFLVEGDLRREVTMNIKRLMDLGCYRGIRHRRGLPVHGQRTKTNARTRKGPAKSITR</sequence>
<accession>B7J4A1</accession>
<name>RS13_ACIF2</name>
<evidence type="ECO:0000255" key="1">
    <source>
        <dbReference type="HAMAP-Rule" id="MF_01315"/>
    </source>
</evidence>
<evidence type="ECO:0000256" key="2">
    <source>
        <dbReference type="SAM" id="MobiDB-lite"/>
    </source>
</evidence>
<evidence type="ECO:0000305" key="3"/>
<feature type="chain" id="PRO_1000141208" description="Small ribosomal subunit protein uS13">
    <location>
        <begin position="1"/>
        <end position="118"/>
    </location>
</feature>
<feature type="region of interest" description="Disordered" evidence="2">
    <location>
        <begin position="94"/>
        <end position="118"/>
    </location>
</feature>
<keyword id="KW-1185">Reference proteome</keyword>
<keyword id="KW-0687">Ribonucleoprotein</keyword>
<keyword id="KW-0689">Ribosomal protein</keyword>
<keyword id="KW-0694">RNA-binding</keyword>
<keyword id="KW-0699">rRNA-binding</keyword>
<keyword id="KW-0820">tRNA-binding</keyword>
<dbReference type="EMBL" id="CP001219">
    <property type="protein sequence ID" value="ACK80152.1"/>
    <property type="molecule type" value="Genomic_DNA"/>
</dbReference>
<dbReference type="RefSeq" id="WP_009568280.1">
    <property type="nucleotide sequence ID" value="NC_011761.1"/>
</dbReference>
<dbReference type="SMR" id="B7J4A1"/>
<dbReference type="STRING" id="243159.AFE_0351"/>
<dbReference type="PaxDb" id="243159-AFE_0351"/>
<dbReference type="GeneID" id="65279728"/>
<dbReference type="KEGG" id="afr:AFE_0351"/>
<dbReference type="eggNOG" id="COG0099">
    <property type="taxonomic scope" value="Bacteria"/>
</dbReference>
<dbReference type="HOGENOM" id="CLU_103849_1_2_6"/>
<dbReference type="Proteomes" id="UP000001362">
    <property type="component" value="Chromosome"/>
</dbReference>
<dbReference type="GO" id="GO:0005829">
    <property type="term" value="C:cytosol"/>
    <property type="evidence" value="ECO:0007669"/>
    <property type="project" value="TreeGrafter"/>
</dbReference>
<dbReference type="GO" id="GO:0015935">
    <property type="term" value="C:small ribosomal subunit"/>
    <property type="evidence" value="ECO:0007669"/>
    <property type="project" value="TreeGrafter"/>
</dbReference>
<dbReference type="GO" id="GO:0019843">
    <property type="term" value="F:rRNA binding"/>
    <property type="evidence" value="ECO:0007669"/>
    <property type="project" value="UniProtKB-UniRule"/>
</dbReference>
<dbReference type="GO" id="GO:0003735">
    <property type="term" value="F:structural constituent of ribosome"/>
    <property type="evidence" value="ECO:0007669"/>
    <property type="project" value="InterPro"/>
</dbReference>
<dbReference type="GO" id="GO:0000049">
    <property type="term" value="F:tRNA binding"/>
    <property type="evidence" value="ECO:0007669"/>
    <property type="project" value="UniProtKB-UniRule"/>
</dbReference>
<dbReference type="GO" id="GO:0006412">
    <property type="term" value="P:translation"/>
    <property type="evidence" value="ECO:0007669"/>
    <property type="project" value="UniProtKB-UniRule"/>
</dbReference>
<dbReference type="FunFam" id="1.10.8.50:FF:000001">
    <property type="entry name" value="30S ribosomal protein S13"/>
    <property type="match status" value="1"/>
</dbReference>
<dbReference type="FunFam" id="4.10.910.10:FF:000001">
    <property type="entry name" value="30S ribosomal protein S13"/>
    <property type="match status" value="1"/>
</dbReference>
<dbReference type="Gene3D" id="1.10.8.50">
    <property type="match status" value="1"/>
</dbReference>
<dbReference type="Gene3D" id="4.10.910.10">
    <property type="entry name" value="30s ribosomal protein s13, domain 2"/>
    <property type="match status" value="1"/>
</dbReference>
<dbReference type="HAMAP" id="MF_01315">
    <property type="entry name" value="Ribosomal_uS13"/>
    <property type="match status" value="1"/>
</dbReference>
<dbReference type="InterPro" id="IPR027437">
    <property type="entry name" value="Rbsml_uS13_C"/>
</dbReference>
<dbReference type="InterPro" id="IPR001892">
    <property type="entry name" value="Ribosomal_uS13"/>
</dbReference>
<dbReference type="InterPro" id="IPR010979">
    <property type="entry name" value="Ribosomal_uS13-like_H2TH"/>
</dbReference>
<dbReference type="InterPro" id="IPR019980">
    <property type="entry name" value="Ribosomal_uS13_bac-type"/>
</dbReference>
<dbReference type="InterPro" id="IPR018269">
    <property type="entry name" value="Ribosomal_uS13_CS"/>
</dbReference>
<dbReference type="NCBIfam" id="TIGR03631">
    <property type="entry name" value="uS13_bact"/>
    <property type="match status" value="1"/>
</dbReference>
<dbReference type="PANTHER" id="PTHR10871">
    <property type="entry name" value="30S RIBOSOMAL PROTEIN S13/40S RIBOSOMAL PROTEIN S18"/>
    <property type="match status" value="1"/>
</dbReference>
<dbReference type="PANTHER" id="PTHR10871:SF1">
    <property type="entry name" value="SMALL RIBOSOMAL SUBUNIT PROTEIN US13M"/>
    <property type="match status" value="1"/>
</dbReference>
<dbReference type="Pfam" id="PF00416">
    <property type="entry name" value="Ribosomal_S13"/>
    <property type="match status" value="1"/>
</dbReference>
<dbReference type="PIRSF" id="PIRSF002134">
    <property type="entry name" value="Ribosomal_S13"/>
    <property type="match status" value="1"/>
</dbReference>
<dbReference type="SUPFAM" id="SSF46946">
    <property type="entry name" value="S13-like H2TH domain"/>
    <property type="match status" value="1"/>
</dbReference>
<dbReference type="PROSITE" id="PS00646">
    <property type="entry name" value="RIBOSOMAL_S13_1"/>
    <property type="match status" value="1"/>
</dbReference>
<dbReference type="PROSITE" id="PS50159">
    <property type="entry name" value="RIBOSOMAL_S13_2"/>
    <property type="match status" value="1"/>
</dbReference>
<organism>
    <name type="scientific">Acidithiobacillus ferrooxidans (strain ATCC 23270 / DSM 14882 / CIP 104768 / NCIMB 8455)</name>
    <name type="common">Ferrobacillus ferrooxidans (strain ATCC 23270)</name>
    <dbReference type="NCBI Taxonomy" id="243159"/>
    <lineage>
        <taxon>Bacteria</taxon>
        <taxon>Pseudomonadati</taxon>
        <taxon>Pseudomonadota</taxon>
        <taxon>Acidithiobacillia</taxon>
        <taxon>Acidithiobacillales</taxon>
        <taxon>Acidithiobacillaceae</taxon>
        <taxon>Acidithiobacillus</taxon>
    </lineage>
</organism>
<gene>
    <name evidence="1" type="primary">rpsM</name>
    <name type="ordered locus">AFE_0351</name>
</gene>